<gene>
    <name evidence="1" type="primary">tdk</name>
    <name type="ordered locus">BF0659</name>
</gene>
<evidence type="ECO:0000255" key="1">
    <source>
        <dbReference type="HAMAP-Rule" id="MF_00124"/>
    </source>
</evidence>
<name>KITH_BACFR</name>
<proteinExistence type="inferred from homology"/>
<dbReference type="EC" id="2.7.1.21" evidence="1"/>
<dbReference type="EMBL" id="AP006841">
    <property type="protein sequence ID" value="BAD47407.1"/>
    <property type="molecule type" value="Genomic_DNA"/>
</dbReference>
<dbReference type="RefSeq" id="WP_005784663.1">
    <property type="nucleotide sequence ID" value="NZ_UYXF01000001.1"/>
</dbReference>
<dbReference type="RefSeq" id="YP_097941.1">
    <property type="nucleotide sequence ID" value="NC_006347.1"/>
</dbReference>
<dbReference type="SMR" id="Q64YL9"/>
<dbReference type="STRING" id="295405.BF0659"/>
<dbReference type="KEGG" id="bfr:BF0659"/>
<dbReference type="PATRIC" id="fig|295405.11.peg.671"/>
<dbReference type="HOGENOM" id="CLU_064400_3_0_10"/>
<dbReference type="OrthoDB" id="9781579at2"/>
<dbReference type="Proteomes" id="UP000002197">
    <property type="component" value="Chromosome"/>
</dbReference>
<dbReference type="GO" id="GO:0005829">
    <property type="term" value="C:cytosol"/>
    <property type="evidence" value="ECO:0007669"/>
    <property type="project" value="TreeGrafter"/>
</dbReference>
<dbReference type="GO" id="GO:0005524">
    <property type="term" value="F:ATP binding"/>
    <property type="evidence" value="ECO:0007669"/>
    <property type="project" value="UniProtKB-UniRule"/>
</dbReference>
<dbReference type="GO" id="GO:0004797">
    <property type="term" value="F:thymidine kinase activity"/>
    <property type="evidence" value="ECO:0007669"/>
    <property type="project" value="UniProtKB-UniRule"/>
</dbReference>
<dbReference type="GO" id="GO:0008270">
    <property type="term" value="F:zinc ion binding"/>
    <property type="evidence" value="ECO:0007669"/>
    <property type="project" value="UniProtKB-UniRule"/>
</dbReference>
<dbReference type="GO" id="GO:0071897">
    <property type="term" value="P:DNA biosynthetic process"/>
    <property type="evidence" value="ECO:0007669"/>
    <property type="project" value="UniProtKB-KW"/>
</dbReference>
<dbReference type="GO" id="GO:0046104">
    <property type="term" value="P:thymidine metabolic process"/>
    <property type="evidence" value="ECO:0007669"/>
    <property type="project" value="TreeGrafter"/>
</dbReference>
<dbReference type="FunFam" id="3.30.60.20:FF:000048">
    <property type="entry name" value="Thymidine kinase"/>
    <property type="match status" value="1"/>
</dbReference>
<dbReference type="FunFam" id="3.40.50.300:FF:000384">
    <property type="entry name" value="Thymidine kinase"/>
    <property type="match status" value="1"/>
</dbReference>
<dbReference type="Gene3D" id="3.30.60.20">
    <property type="match status" value="1"/>
</dbReference>
<dbReference type="Gene3D" id="3.40.50.300">
    <property type="entry name" value="P-loop containing nucleotide triphosphate hydrolases"/>
    <property type="match status" value="1"/>
</dbReference>
<dbReference type="HAMAP" id="MF_00124">
    <property type="entry name" value="Thymidine_kinase"/>
    <property type="match status" value="1"/>
</dbReference>
<dbReference type="InterPro" id="IPR027417">
    <property type="entry name" value="P-loop_NTPase"/>
</dbReference>
<dbReference type="InterPro" id="IPR001267">
    <property type="entry name" value="Thymidine_kinase"/>
</dbReference>
<dbReference type="NCBIfam" id="NF003296">
    <property type="entry name" value="PRK04296.1-1"/>
    <property type="match status" value="1"/>
</dbReference>
<dbReference type="PANTHER" id="PTHR11441">
    <property type="entry name" value="THYMIDINE KINASE"/>
    <property type="match status" value="1"/>
</dbReference>
<dbReference type="PANTHER" id="PTHR11441:SF0">
    <property type="entry name" value="THYMIDINE KINASE, CYTOSOLIC"/>
    <property type="match status" value="1"/>
</dbReference>
<dbReference type="Pfam" id="PF00265">
    <property type="entry name" value="TK"/>
    <property type="match status" value="1"/>
</dbReference>
<dbReference type="PIRSF" id="PIRSF035805">
    <property type="entry name" value="TK_cell"/>
    <property type="match status" value="1"/>
</dbReference>
<dbReference type="SUPFAM" id="SSF57716">
    <property type="entry name" value="Glucocorticoid receptor-like (DNA-binding domain)"/>
    <property type="match status" value="1"/>
</dbReference>
<dbReference type="SUPFAM" id="SSF52540">
    <property type="entry name" value="P-loop containing nucleoside triphosphate hydrolases"/>
    <property type="match status" value="1"/>
</dbReference>
<organism>
    <name type="scientific">Bacteroides fragilis (strain YCH46)</name>
    <dbReference type="NCBI Taxonomy" id="295405"/>
    <lineage>
        <taxon>Bacteria</taxon>
        <taxon>Pseudomonadati</taxon>
        <taxon>Bacteroidota</taxon>
        <taxon>Bacteroidia</taxon>
        <taxon>Bacteroidales</taxon>
        <taxon>Bacteroidaceae</taxon>
        <taxon>Bacteroides</taxon>
    </lineage>
</organism>
<sequence>MVLFSEDHIQETRRRGRIEVICGSMFSGKTEELIRRMKRAKFARQRVEIFKPAIDTRYSEGDVVSHDSNSISSTPIDSSASILLFTSEIDVVGIDEAQFFDSGLIDVCNQLANNGVRVIIAGLDMDFKGVPFGPMPALCAIADEVSKVHAICVKCGQLASFSHRTVKNDKQVLLGETAQYEPLCRECYQRALQEDREKS</sequence>
<comment type="catalytic activity">
    <reaction evidence="1">
        <text>thymidine + ATP = dTMP + ADP + H(+)</text>
        <dbReference type="Rhea" id="RHEA:19129"/>
        <dbReference type="ChEBI" id="CHEBI:15378"/>
        <dbReference type="ChEBI" id="CHEBI:17748"/>
        <dbReference type="ChEBI" id="CHEBI:30616"/>
        <dbReference type="ChEBI" id="CHEBI:63528"/>
        <dbReference type="ChEBI" id="CHEBI:456216"/>
        <dbReference type="EC" id="2.7.1.21"/>
    </reaction>
</comment>
<comment type="subunit">
    <text evidence="1">Homotetramer.</text>
</comment>
<comment type="subcellular location">
    <subcellularLocation>
        <location evidence="1">Cytoplasm</location>
    </subcellularLocation>
</comment>
<comment type="similarity">
    <text evidence="1">Belongs to the thymidine kinase family.</text>
</comment>
<reference key="1">
    <citation type="journal article" date="2004" name="Proc. Natl. Acad. Sci. U.S.A.">
        <title>Genomic analysis of Bacteroides fragilis reveals extensive DNA inversions regulating cell surface adaptation.</title>
        <authorList>
            <person name="Kuwahara T."/>
            <person name="Yamashita A."/>
            <person name="Hirakawa H."/>
            <person name="Nakayama H."/>
            <person name="Toh H."/>
            <person name="Okada N."/>
            <person name="Kuhara S."/>
            <person name="Hattori M."/>
            <person name="Hayashi T."/>
            <person name="Ohnishi Y."/>
        </authorList>
    </citation>
    <scope>NUCLEOTIDE SEQUENCE [LARGE SCALE GENOMIC DNA]</scope>
    <source>
        <strain>YCH46</strain>
    </source>
</reference>
<feature type="chain" id="PRO_0000174958" description="Thymidine kinase">
    <location>
        <begin position="1"/>
        <end position="199"/>
    </location>
</feature>
<feature type="active site" description="Proton acceptor" evidence="1">
    <location>
        <position position="96"/>
    </location>
</feature>
<feature type="binding site" evidence="1">
    <location>
        <begin position="23"/>
        <end position="30"/>
    </location>
    <ligand>
        <name>ATP</name>
        <dbReference type="ChEBI" id="CHEBI:30616"/>
    </ligand>
</feature>
<feature type="binding site" evidence="1">
    <location>
        <begin position="95"/>
        <end position="98"/>
    </location>
    <ligand>
        <name>ATP</name>
        <dbReference type="ChEBI" id="CHEBI:30616"/>
    </ligand>
</feature>
<feature type="binding site" evidence="1">
    <location>
        <position position="152"/>
    </location>
    <ligand>
        <name>Zn(2+)</name>
        <dbReference type="ChEBI" id="CHEBI:29105"/>
    </ligand>
</feature>
<feature type="binding site" evidence="1">
    <location>
        <position position="155"/>
    </location>
    <ligand>
        <name>Zn(2+)</name>
        <dbReference type="ChEBI" id="CHEBI:29105"/>
    </ligand>
</feature>
<feature type="binding site" evidence="1">
    <location>
        <position position="184"/>
    </location>
    <ligand>
        <name>Zn(2+)</name>
        <dbReference type="ChEBI" id="CHEBI:29105"/>
    </ligand>
</feature>
<feature type="binding site" evidence="1">
    <location>
        <position position="187"/>
    </location>
    <ligand>
        <name>Zn(2+)</name>
        <dbReference type="ChEBI" id="CHEBI:29105"/>
    </ligand>
</feature>
<accession>Q64YL9</accession>
<keyword id="KW-0067">ATP-binding</keyword>
<keyword id="KW-0963">Cytoplasm</keyword>
<keyword id="KW-0237">DNA synthesis</keyword>
<keyword id="KW-0418">Kinase</keyword>
<keyword id="KW-0479">Metal-binding</keyword>
<keyword id="KW-0547">Nucleotide-binding</keyword>
<keyword id="KW-0808">Transferase</keyword>
<keyword id="KW-0862">Zinc</keyword>
<protein>
    <recommendedName>
        <fullName evidence="1">Thymidine kinase</fullName>
        <ecNumber evidence="1">2.7.1.21</ecNumber>
    </recommendedName>
</protein>